<evidence type="ECO:0000255" key="1">
    <source>
        <dbReference type="HAMAP-Rule" id="MF_01305"/>
    </source>
</evidence>
<feature type="chain" id="PRO_0000276098" description="Photosystem II reaction center protein J">
    <location>
        <begin position="1"/>
        <end position="40"/>
    </location>
</feature>
<feature type="transmembrane region" description="Helical" evidence="1">
    <location>
        <begin position="8"/>
        <end position="28"/>
    </location>
</feature>
<geneLocation type="chloroplast"/>
<sequence length="40" mass="4103">MADTTGRIPLWIIGTVAGILVIGLVGVFFYGSYSGLGSSL</sequence>
<protein>
    <recommendedName>
        <fullName evidence="1">Photosystem II reaction center protein J</fullName>
        <shortName evidence="1">PSII-J</shortName>
    </recommendedName>
</protein>
<gene>
    <name evidence="1" type="primary">psbJ</name>
</gene>
<organism>
    <name type="scientific">Helianthus annuus</name>
    <name type="common">Common sunflower</name>
    <dbReference type="NCBI Taxonomy" id="4232"/>
    <lineage>
        <taxon>Eukaryota</taxon>
        <taxon>Viridiplantae</taxon>
        <taxon>Streptophyta</taxon>
        <taxon>Embryophyta</taxon>
        <taxon>Tracheophyta</taxon>
        <taxon>Spermatophyta</taxon>
        <taxon>Magnoliopsida</taxon>
        <taxon>eudicotyledons</taxon>
        <taxon>Gunneridae</taxon>
        <taxon>Pentapetalae</taxon>
        <taxon>asterids</taxon>
        <taxon>campanulids</taxon>
        <taxon>Asterales</taxon>
        <taxon>Asteraceae</taxon>
        <taxon>Asteroideae</taxon>
        <taxon>Heliantheae alliance</taxon>
        <taxon>Heliantheae</taxon>
        <taxon>Helianthus</taxon>
    </lineage>
</organism>
<reference key="1">
    <citation type="submission" date="2006-01" db="EMBL/GenBank/DDBJ databases">
        <title>A comparison of the first two published chloroplast genomes in Asteraceae: Lactuca and Helianthus.</title>
        <authorList>
            <person name="Timme R.E."/>
            <person name="Kuehl J.V."/>
            <person name="Boore J.L."/>
            <person name="Jansen R.K."/>
        </authorList>
    </citation>
    <scope>NUCLEOTIDE SEQUENCE [LARGE SCALE GENOMIC DNA]</scope>
    <source>
        <strain>cv. HA383</strain>
    </source>
</reference>
<keyword id="KW-0150">Chloroplast</keyword>
<keyword id="KW-0472">Membrane</keyword>
<keyword id="KW-0602">Photosynthesis</keyword>
<keyword id="KW-0604">Photosystem II</keyword>
<keyword id="KW-0934">Plastid</keyword>
<keyword id="KW-0674">Reaction center</keyword>
<keyword id="KW-0793">Thylakoid</keyword>
<keyword id="KW-0812">Transmembrane</keyword>
<keyword id="KW-1133">Transmembrane helix</keyword>
<comment type="function">
    <text evidence="1">One of the components of the core complex of photosystem II (PSII). PSII is a light-driven water:plastoquinone oxidoreductase that uses light energy to abstract electrons from H(2)O, generating O(2) and a proton gradient subsequently used for ATP formation. It consists of a core antenna complex that captures photons, and an electron transfer chain that converts photonic excitation into a charge separation.</text>
</comment>
<comment type="subunit">
    <text evidence="1">PSII is composed of 1 copy each of membrane proteins PsbA, PsbB, PsbC, PsbD, PsbE, PsbF, PsbH, PsbI, PsbJ, PsbK, PsbL, PsbM, PsbT, PsbX, PsbY, PsbZ, Psb30/Ycf12, at least 3 peripheral proteins of the oxygen-evolving complex and a large number of cofactors. It forms dimeric complexes.</text>
</comment>
<comment type="subcellular location">
    <subcellularLocation>
        <location evidence="1">Plastid</location>
        <location evidence="1">Chloroplast thylakoid membrane</location>
        <topology evidence="1">Single-pass membrane protein</topology>
    </subcellularLocation>
</comment>
<comment type="similarity">
    <text evidence="1">Belongs to the PsbJ family.</text>
</comment>
<proteinExistence type="inferred from homology"/>
<dbReference type="EMBL" id="DQ383815">
    <property type="protein sequence ID" value="ABD47160.1"/>
    <property type="molecule type" value="Genomic_DNA"/>
</dbReference>
<dbReference type="RefSeq" id="YP_588131.1">
    <property type="nucleotide sequence ID" value="NC_007977.1"/>
</dbReference>
<dbReference type="SMR" id="Q1KXU5"/>
<dbReference type="GeneID" id="4055668"/>
<dbReference type="KEGG" id="han:4055668"/>
<dbReference type="GO" id="GO:0009535">
    <property type="term" value="C:chloroplast thylakoid membrane"/>
    <property type="evidence" value="ECO:0007669"/>
    <property type="project" value="UniProtKB-SubCell"/>
</dbReference>
<dbReference type="GO" id="GO:0009539">
    <property type="term" value="C:photosystem II reaction center"/>
    <property type="evidence" value="ECO:0007669"/>
    <property type="project" value="InterPro"/>
</dbReference>
<dbReference type="GO" id="GO:0015979">
    <property type="term" value="P:photosynthesis"/>
    <property type="evidence" value="ECO:0007669"/>
    <property type="project" value="UniProtKB-UniRule"/>
</dbReference>
<dbReference type="Gene3D" id="6.10.250.2070">
    <property type="match status" value="1"/>
</dbReference>
<dbReference type="HAMAP" id="MF_01305">
    <property type="entry name" value="PSII_PsbJ"/>
    <property type="match status" value="1"/>
</dbReference>
<dbReference type="InterPro" id="IPR002682">
    <property type="entry name" value="PSII_PsbJ"/>
</dbReference>
<dbReference type="InterPro" id="IPR037267">
    <property type="entry name" value="PSII_PsbJ_sf"/>
</dbReference>
<dbReference type="NCBIfam" id="NF002722">
    <property type="entry name" value="PRK02565.1"/>
    <property type="match status" value="1"/>
</dbReference>
<dbReference type="PANTHER" id="PTHR34812">
    <property type="entry name" value="PHOTOSYSTEM II REACTION CENTER PROTEIN J"/>
    <property type="match status" value="1"/>
</dbReference>
<dbReference type="PANTHER" id="PTHR34812:SF3">
    <property type="entry name" value="PHOTOSYSTEM II REACTION CENTER PROTEIN J"/>
    <property type="match status" value="1"/>
</dbReference>
<dbReference type="Pfam" id="PF01788">
    <property type="entry name" value="PsbJ"/>
    <property type="match status" value="1"/>
</dbReference>
<dbReference type="SUPFAM" id="SSF161021">
    <property type="entry name" value="Photosystem II reaction center protein J, PsbJ"/>
    <property type="match status" value="1"/>
</dbReference>
<name>PSBJ_HELAN</name>
<accession>Q1KXU5</accession>